<gene>
    <name evidence="1" type="primary">rhaB</name>
    <name type="ordered locus">SEN3838</name>
</gene>
<evidence type="ECO:0000255" key="1">
    <source>
        <dbReference type="HAMAP-Rule" id="MF_01535"/>
    </source>
</evidence>
<reference key="1">
    <citation type="journal article" date="2008" name="Genome Res.">
        <title>Comparative genome analysis of Salmonella enteritidis PT4 and Salmonella gallinarum 287/91 provides insights into evolutionary and host adaptation pathways.</title>
        <authorList>
            <person name="Thomson N.R."/>
            <person name="Clayton D.J."/>
            <person name="Windhorst D."/>
            <person name="Vernikos G."/>
            <person name="Davidson S."/>
            <person name="Churcher C."/>
            <person name="Quail M.A."/>
            <person name="Stevens M."/>
            <person name="Jones M.A."/>
            <person name="Watson M."/>
            <person name="Barron A."/>
            <person name="Layton A."/>
            <person name="Pickard D."/>
            <person name="Kingsley R.A."/>
            <person name="Bignell A."/>
            <person name="Clark L."/>
            <person name="Harris B."/>
            <person name="Ormond D."/>
            <person name="Abdellah Z."/>
            <person name="Brooks K."/>
            <person name="Cherevach I."/>
            <person name="Chillingworth T."/>
            <person name="Woodward J."/>
            <person name="Norberczak H."/>
            <person name="Lord A."/>
            <person name="Arrowsmith C."/>
            <person name="Jagels K."/>
            <person name="Moule S."/>
            <person name="Mungall K."/>
            <person name="Saunders M."/>
            <person name="Whitehead S."/>
            <person name="Chabalgoity J.A."/>
            <person name="Maskell D."/>
            <person name="Humphreys T."/>
            <person name="Roberts M."/>
            <person name="Barrow P.A."/>
            <person name="Dougan G."/>
            <person name="Parkhill J."/>
        </authorList>
    </citation>
    <scope>NUCLEOTIDE SEQUENCE [LARGE SCALE GENOMIC DNA]</scope>
    <source>
        <strain>P125109</strain>
    </source>
</reference>
<feature type="chain" id="PRO_1000146550" description="Rhamnulokinase">
    <location>
        <begin position="1"/>
        <end position="489"/>
    </location>
</feature>
<feature type="active site" description="Proton acceptor" evidence="1">
    <location>
        <position position="237"/>
    </location>
</feature>
<feature type="binding site" evidence="1">
    <location>
        <begin position="13"/>
        <end position="17"/>
    </location>
    <ligand>
        <name>ATP</name>
        <dbReference type="ChEBI" id="CHEBI:30616"/>
    </ligand>
</feature>
<feature type="binding site" evidence="1">
    <location>
        <position position="83"/>
    </location>
    <ligand>
        <name>substrate</name>
    </ligand>
</feature>
<feature type="binding site" evidence="1">
    <location>
        <begin position="236"/>
        <end position="238"/>
    </location>
    <ligand>
        <name>substrate</name>
    </ligand>
</feature>
<feature type="binding site" evidence="1">
    <location>
        <position position="259"/>
    </location>
    <ligand>
        <name>ATP</name>
        <dbReference type="ChEBI" id="CHEBI:30616"/>
    </ligand>
</feature>
<feature type="binding site" evidence="1">
    <location>
        <position position="296"/>
    </location>
    <ligand>
        <name>substrate</name>
    </ligand>
</feature>
<feature type="binding site" evidence="1">
    <location>
        <position position="304"/>
    </location>
    <ligand>
        <name>ATP</name>
        <dbReference type="ChEBI" id="CHEBI:30616"/>
    </ligand>
</feature>
<feature type="binding site" evidence="1">
    <location>
        <position position="402"/>
    </location>
    <ligand>
        <name>ATP</name>
        <dbReference type="ChEBI" id="CHEBI:30616"/>
    </ligand>
</feature>
<feature type="disulfide bond" evidence="1">
    <location>
        <begin position="68"/>
        <end position="222"/>
    </location>
</feature>
<feature type="disulfide bond" evidence="1">
    <location>
        <begin position="353"/>
        <end position="370"/>
    </location>
</feature>
<feature type="disulfide bond" evidence="1">
    <location>
        <begin position="413"/>
        <end position="417"/>
    </location>
</feature>
<sequence length="489" mass="54563">MTFRHCVAVDLGASSGRVMLARYDSKHRTLTLREIHRFVNCLQKTDGFDTWDIDSLEKDIRLGLKKVCNEGILIDSIGIDTWGVDYVLLDKQGQRVGLPVSYRDNRTTGIMPQALVQIGKSEIYRRSGIQFLPFNTIYQLRALTKQQPELTAQVAHALLMPDYFSYRLTGEMNWEYTNATTTQLVNINTDDWDDTLLAWTGAKKSWFGRPSHPGNVIGDWICPQGNRIPVVAVASHDTASAVIASPLANKHSAYLSSGTWSLMGFESKMPYTTDEALAANITNEGGAEGRYRVLKNIMGLWLLQRVLKERRITDLPALIAQTEALPACRFLINPNDDRFINPDDMRAEIQAACRETDQPVPVSDAELARCIFDSLALLYADILHELANLRGEKFTQLHIVGGGCQNSLLNQLCADACGIRVMAGPVEASTLGNIGIQLMTLDELNNVDDFRQVVSANYDLTTYIPNPDSEIARHVAQFQPKRQTKELCA</sequence>
<accession>B5QWY3</accession>
<proteinExistence type="inferred from homology"/>
<keyword id="KW-0067">ATP-binding</keyword>
<keyword id="KW-1015">Disulfide bond</keyword>
<keyword id="KW-0418">Kinase</keyword>
<keyword id="KW-0460">Magnesium</keyword>
<keyword id="KW-0547">Nucleotide-binding</keyword>
<keyword id="KW-0684">Rhamnose metabolism</keyword>
<keyword id="KW-0808">Transferase</keyword>
<organism>
    <name type="scientific">Salmonella enteritidis PT4 (strain P125109)</name>
    <dbReference type="NCBI Taxonomy" id="550537"/>
    <lineage>
        <taxon>Bacteria</taxon>
        <taxon>Pseudomonadati</taxon>
        <taxon>Pseudomonadota</taxon>
        <taxon>Gammaproteobacteria</taxon>
        <taxon>Enterobacterales</taxon>
        <taxon>Enterobacteriaceae</taxon>
        <taxon>Salmonella</taxon>
    </lineage>
</organism>
<name>RHAB_SALEP</name>
<protein>
    <recommendedName>
        <fullName evidence="1">Rhamnulokinase</fullName>
        <shortName evidence="1">RhaB</shortName>
        <ecNumber evidence="1">2.7.1.5</ecNumber>
    </recommendedName>
    <alternativeName>
        <fullName evidence="1">ATP:L-rhamnulose phosphotransferase</fullName>
    </alternativeName>
    <alternativeName>
        <fullName evidence="1">L-rhamnulose 1-kinase</fullName>
    </alternativeName>
    <alternativeName>
        <fullName evidence="1">Rhamnulose kinase</fullName>
    </alternativeName>
</protein>
<comment type="function">
    <text evidence="1">Involved in the catabolism of L-rhamnose (6-deoxy-L-mannose). Catalyzes the transfer of the gamma-phosphate group from ATP to the 1-hydroxyl group of L-rhamnulose to yield L-rhamnulose 1-phosphate.</text>
</comment>
<comment type="catalytic activity">
    <reaction evidence="1">
        <text>L-rhamnulose + ATP = L-rhamnulose 1-phosphate + ADP + H(+)</text>
        <dbReference type="Rhea" id="RHEA:20117"/>
        <dbReference type="ChEBI" id="CHEBI:15378"/>
        <dbReference type="ChEBI" id="CHEBI:17897"/>
        <dbReference type="ChEBI" id="CHEBI:30616"/>
        <dbReference type="ChEBI" id="CHEBI:58313"/>
        <dbReference type="ChEBI" id="CHEBI:456216"/>
        <dbReference type="EC" id="2.7.1.5"/>
    </reaction>
</comment>
<comment type="cofactor">
    <cofactor evidence="1">
        <name>Mg(2+)</name>
        <dbReference type="ChEBI" id="CHEBI:18420"/>
    </cofactor>
</comment>
<comment type="pathway">
    <text evidence="1">Carbohydrate degradation; L-rhamnose degradation; glycerone phosphate from L-rhamnose: step 2/3.</text>
</comment>
<comment type="similarity">
    <text evidence="1">Belongs to the rhamnulokinase family.</text>
</comment>
<dbReference type="EC" id="2.7.1.5" evidence="1"/>
<dbReference type="EMBL" id="AM933172">
    <property type="protein sequence ID" value="CAR35411.1"/>
    <property type="molecule type" value="Genomic_DNA"/>
</dbReference>
<dbReference type="RefSeq" id="WP_000143967.1">
    <property type="nucleotide sequence ID" value="NC_011294.1"/>
</dbReference>
<dbReference type="SMR" id="B5QWY3"/>
<dbReference type="KEGG" id="set:SEN3838"/>
<dbReference type="HOGENOM" id="CLU_039395_0_0_6"/>
<dbReference type="UniPathway" id="UPA00541">
    <property type="reaction ID" value="UER00602"/>
</dbReference>
<dbReference type="Proteomes" id="UP000000613">
    <property type="component" value="Chromosome"/>
</dbReference>
<dbReference type="GO" id="GO:0005829">
    <property type="term" value="C:cytosol"/>
    <property type="evidence" value="ECO:0007669"/>
    <property type="project" value="TreeGrafter"/>
</dbReference>
<dbReference type="GO" id="GO:0005524">
    <property type="term" value="F:ATP binding"/>
    <property type="evidence" value="ECO:0007669"/>
    <property type="project" value="UniProtKB-KW"/>
</dbReference>
<dbReference type="GO" id="GO:0004370">
    <property type="term" value="F:glycerol kinase activity"/>
    <property type="evidence" value="ECO:0007669"/>
    <property type="project" value="TreeGrafter"/>
</dbReference>
<dbReference type="GO" id="GO:0008993">
    <property type="term" value="F:rhamnulokinase activity"/>
    <property type="evidence" value="ECO:0007669"/>
    <property type="project" value="UniProtKB-UniRule"/>
</dbReference>
<dbReference type="GO" id="GO:0006071">
    <property type="term" value="P:glycerol metabolic process"/>
    <property type="evidence" value="ECO:0007669"/>
    <property type="project" value="TreeGrafter"/>
</dbReference>
<dbReference type="GO" id="GO:0019301">
    <property type="term" value="P:rhamnose catabolic process"/>
    <property type="evidence" value="ECO:0007669"/>
    <property type="project" value="UniProtKB-UniRule"/>
</dbReference>
<dbReference type="CDD" id="cd07771">
    <property type="entry name" value="ASKHA_NBD_FGGY_RhaB-like"/>
    <property type="match status" value="1"/>
</dbReference>
<dbReference type="FunFam" id="3.30.420.40:FF:000064">
    <property type="entry name" value="Rhamnulokinase"/>
    <property type="match status" value="1"/>
</dbReference>
<dbReference type="FunFam" id="3.30.420.40:FF:000073">
    <property type="entry name" value="Rhamnulokinase"/>
    <property type="match status" value="1"/>
</dbReference>
<dbReference type="Gene3D" id="3.30.420.40">
    <property type="match status" value="2"/>
</dbReference>
<dbReference type="HAMAP" id="MF_01535">
    <property type="entry name" value="Rhamnulokinase"/>
    <property type="match status" value="1"/>
</dbReference>
<dbReference type="InterPro" id="IPR043129">
    <property type="entry name" value="ATPase_NBD"/>
</dbReference>
<dbReference type="InterPro" id="IPR018485">
    <property type="entry name" value="FGGY_C"/>
</dbReference>
<dbReference type="InterPro" id="IPR018484">
    <property type="entry name" value="FGGY_N"/>
</dbReference>
<dbReference type="InterPro" id="IPR013449">
    <property type="entry name" value="Rhamnulokinase"/>
</dbReference>
<dbReference type="NCBIfam" id="NF007925">
    <property type="entry name" value="PRK10640.1"/>
    <property type="match status" value="1"/>
</dbReference>
<dbReference type="NCBIfam" id="TIGR02627">
    <property type="entry name" value="rhamnulo_kin"/>
    <property type="match status" value="1"/>
</dbReference>
<dbReference type="PANTHER" id="PTHR10196:SF93">
    <property type="entry name" value="L-RHAMNULOKINASE"/>
    <property type="match status" value="1"/>
</dbReference>
<dbReference type="PANTHER" id="PTHR10196">
    <property type="entry name" value="SUGAR KINASE"/>
    <property type="match status" value="1"/>
</dbReference>
<dbReference type="Pfam" id="PF02782">
    <property type="entry name" value="FGGY_C"/>
    <property type="match status" value="1"/>
</dbReference>
<dbReference type="Pfam" id="PF00370">
    <property type="entry name" value="FGGY_N"/>
    <property type="match status" value="1"/>
</dbReference>
<dbReference type="SUPFAM" id="SSF53067">
    <property type="entry name" value="Actin-like ATPase domain"/>
    <property type="match status" value="2"/>
</dbReference>